<accession>Q7VCB6</accession>
<feature type="chain" id="PRO_0000134217" description="Small ribosomal subunit protein uS2">
    <location>
        <begin position="1"/>
        <end position="238"/>
    </location>
</feature>
<protein>
    <recommendedName>
        <fullName evidence="1">Small ribosomal subunit protein uS2</fullName>
    </recommendedName>
    <alternativeName>
        <fullName evidence="2">30S ribosomal protein S2</fullName>
    </alternativeName>
</protein>
<proteinExistence type="inferred from homology"/>
<organism>
    <name type="scientific">Prochlorococcus marinus (strain SARG / CCMP1375 / SS120)</name>
    <dbReference type="NCBI Taxonomy" id="167539"/>
    <lineage>
        <taxon>Bacteria</taxon>
        <taxon>Bacillati</taxon>
        <taxon>Cyanobacteriota</taxon>
        <taxon>Cyanophyceae</taxon>
        <taxon>Synechococcales</taxon>
        <taxon>Prochlorococcaceae</taxon>
        <taxon>Prochlorococcus</taxon>
    </lineage>
</organism>
<evidence type="ECO:0000255" key="1">
    <source>
        <dbReference type="HAMAP-Rule" id="MF_00291"/>
    </source>
</evidence>
<evidence type="ECO:0000305" key="2"/>
<reference key="1">
    <citation type="journal article" date="2003" name="Proc. Natl. Acad. Sci. U.S.A.">
        <title>Genome sequence of the cyanobacterium Prochlorococcus marinus SS120, a nearly minimal oxyphototrophic genome.</title>
        <authorList>
            <person name="Dufresne A."/>
            <person name="Salanoubat M."/>
            <person name="Partensky F."/>
            <person name="Artiguenave F."/>
            <person name="Axmann I.M."/>
            <person name="Barbe V."/>
            <person name="Duprat S."/>
            <person name="Galperin M.Y."/>
            <person name="Koonin E.V."/>
            <person name="Le Gall F."/>
            <person name="Makarova K.S."/>
            <person name="Ostrowski M."/>
            <person name="Oztas S."/>
            <person name="Robert C."/>
            <person name="Rogozin I.B."/>
            <person name="Scanlan D.J."/>
            <person name="Tandeau de Marsac N."/>
            <person name="Weissenbach J."/>
            <person name="Wincker P."/>
            <person name="Wolf Y.I."/>
            <person name="Hess W.R."/>
        </authorList>
    </citation>
    <scope>NUCLEOTIDE SEQUENCE [LARGE SCALE GENOMIC DNA]</scope>
    <source>
        <strain>SARG / CCMP1375 / SS120</strain>
    </source>
</reference>
<gene>
    <name evidence="1" type="primary">rpsB</name>
    <name evidence="1" type="synonym">rps2</name>
    <name type="ordered locus">Pro_0825</name>
</gene>
<keyword id="KW-1185">Reference proteome</keyword>
<keyword id="KW-0687">Ribonucleoprotein</keyword>
<keyword id="KW-0689">Ribosomal protein</keyword>
<comment type="similarity">
    <text evidence="1">Belongs to the universal ribosomal protein uS2 family.</text>
</comment>
<name>RS2_PROMA</name>
<dbReference type="EMBL" id="AE017126">
    <property type="protein sequence ID" value="AAP99869.1"/>
    <property type="molecule type" value="Genomic_DNA"/>
</dbReference>
<dbReference type="RefSeq" id="NP_875217.1">
    <property type="nucleotide sequence ID" value="NC_005042.1"/>
</dbReference>
<dbReference type="RefSeq" id="WP_011124977.1">
    <property type="nucleotide sequence ID" value="NC_005042.1"/>
</dbReference>
<dbReference type="SMR" id="Q7VCB6"/>
<dbReference type="STRING" id="167539.Pro_0825"/>
<dbReference type="EnsemblBacteria" id="AAP99869">
    <property type="protein sequence ID" value="AAP99869"/>
    <property type="gene ID" value="Pro_0825"/>
</dbReference>
<dbReference type="KEGG" id="pma:Pro_0825"/>
<dbReference type="PATRIC" id="fig|167539.5.peg.872"/>
<dbReference type="eggNOG" id="COG0052">
    <property type="taxonomic scope" value="Bacteria"/>
</dbReference>
<dbReference type="HOGENOM" id="CLU_040318_1_2_3"/>
<dbReference type="OrthoDB" id="9808036at2"/>
<dbReference type="Proteomes" id="UP000001420">
    <property type="component" value="Chromosome"/>
</dbReference>
<dbReference type="GO" id="GO:0022627">
    <property type="term" value="C:cytosolic small ribosomal subunit"/>
    <property type="evidence" value="ECO:0007669"/>
    <property type="project" value="TreeGrafter"/>
</dbReference>
<dbReference type="GO" id="GO:0003735">
    <property type="term" value="F:structural constituent of ribosome"/>
    <property type="evidence" value="ECO:0007669"/>
    <property type="project" value="InterPro"/>
</dbReference>
<dbReference type="GO" id="GO:0006412">
    <property type="term" value="P:translation"/>
    <property type="evidence" value="ECO:0007669"/>
    <property type="project" value="UniProtKB-UniRule"/>
</dbReference>
<dbReference type="CDD" id="cd01425">
    <property type="entry name" value="RPS2"/>
    <property type="match status" value="1"/>
</dbReference>
<dbReference type="FunFam" id="1.10.287.610:FF:000001">
    <property type="entry name" value="30S ribosomal protein S2"/>
    <property type="match status" value="1"/>
</dbReference>
<dbReference type="Gene3D" id="3.40.50.10490">
    <property type="entry name" value="Glucose-6-phosphate isomerase like protein, domain 1"/>
    <property type="match status" value="1"/>
</dbReference>
<dbReference type="Gene3D" id="1.10.287.610">
    <property type="entry name" value="Helix hairpin bin"/>
    <property type="match status" value="1"/>
</dbReference>
<dbReference type="HAMAP" id="MF_00291_B">
    <property type="entry name" value="Ribosomal_uS2_B"/>
    <property type="match status" value="1"/>
</dbReference>
<dbReference type="InterPro" id="IPR001865">
    <property type="entry name" value="Ribosomal_uS2"/>
</dbReference>
<dbReference type="InterPro" id="IPR005706">
    <property type="entry name" value="Ribosomal_uS2_bac/mit/plastid"/>
</dbReference>
<dbReference type="InterPro" id="IPR018130">
    <property type="entry name" value="Ribosomal_uS2_CS"/>
</dbReference>
<dbReference type="InterPro" id="IPR023591">
    <property type="entry name" value="Ribosomal_uS2_flav_dom_sf"/>
</dbReference>
<dbReference type="NCBIfam" id="TIGR01011">
    <property type="entry name" value="rpsB_bact"/>
    <property type="match status" value="1"/>
</dbReference>
<dbReference type="PANTHER" id="PTHR12534">
    <property type="entry name" value="30S RIBOSOMAL PROTEIN S2 PROKARYOTIC AND ORGANELLAR"/>
    <property type="match status" value="1"/>
</dbReference>
<dbReference type="PANTHER" id="PTHR12534:SF0">
    <property type="entry name" value="SMALL RIBOSOMAL SUBUNIT PROTEIN US2M"/>
    <property type="match status" value="1"/>
</dbReference>
<dbReference type="Pfam" id="PF00318">
    <property type="entry name" value="Ribosomal_S2"/>
    <property type="match status" value="1"/>
</dbReference>
<dbReference type="PRINTS" id="PR00395">
    <property type="entry name" value="RIBOSOMALS2"/>
</dbReference>
<dbReference type="SUPFAM" id="SSF52313">
    <property type="entry name" value="Ribosomal protein S2"/>
    <property type="match status" value="1"/>
</dbReference>
<dbReference type="PROSITE" id="PS00962">
    <property type="entry name" value="RIBOSOMAL_S2_1"/>
    <property type="match status" value="1"/>
</dbReference>
<sequence>MAVVTLSEMMEAGAHFGHQTRRWNPKMSRYIYCARNGVHIIDLVKTAVCMNNAYKWTRNAAKSGKRFLFVGTKKQASEVVAQEAARCGASYVNQRWLGGMLTNWTTMKARIDRLKDLERMESSGAIAMRPKKEASVLRHELERLQKYLGGLKGMKRLPDVVVLVDQRRETNAVLEARKLDIPLVSMLDTNCDPDLCEVPIPCNDDAVRSVQLVLGRIADAINEGRHGSNDQRARQKYS</sequence>